<protein>
    <recommendedName>
        <fullName evidence="1">Protein GrpE</fullName>
    </recommendedName>
    <alternativeName>
        <fullName evidence="1">HSP-70 cofactor</fullName>
    </alternativeName>
</protein>
<name>GRPE_ACTP2</name>
<keyword id="KW-0143">Chaperone</keyword>
<keyword id="KW-0963">Cytoplasm</keyword>
<keyword id="KW-1185">Reference proteome</keyword>
<keyword id="KW-0346">Stress response</keyword>
<sequence>MTAQNENAQAQAEQVEVANEAQLEQTAEIQQEQPVEAELAAAYARINELETYVAEADNREKDIQLRAQAEIQNIRRRAEQDVEKAHKFALEKFSKELLTVVDNLERGLNALDTAVTDEKTQALVDGVEMTHKEFISTLAKFGVEAVGVVGEAFNPEVHEAISMQPAEGIEANHISVVLQKGYTLQGRVLRPAMVMVAG</sequence>
<feature type="chain" id="PRO_1000053534" description="Protein GrpE">
    <location>
        <begin position="1"/>
        <end position="198"/>
    </location>
</feature>
<dbReference type="EMBL" id="CP000569">
    <property type="protein sequence ID" value="ABN73471.1"/>
    <property type="molecule type" value="Genomic_DNA"/>
</dbReference>
<dbReference type="RefSeq" id="WP_005600469.1">
    <property type="nucleotide sequence ID" value="NC_009053.1"/>
</dbReference>
<dbReference type="SMR" id="A3MZ85"/>
<dbReference type="STRING" id="416269.APL_0367"/>
<dbReference type="EnsemblBacteria" id="ABN73471">
    <property type="protein sequence ID" value="ABN73471"/>
    <property type="gene ID" value="APL_0367"/>
</dbReference>
<dbReference type="KEGG" id="apl:APL_0367"/>
<dbReference type="eggNOG" id="COG0576">
    <property type="taxonomic scope" value="Bacteria"/>
</dbReference>
<dbReference type="HOGENOM" id="CLU_057217_6_0_6"/>
<dbReference type="Proteomes" id="UP000001432">
    <property type="component" value="Chromosome"/>
</dbReference>
<dbReference type="GO" id="GO:0005829">
    <property type="term" value="C:cytosol"/>
    <property type="evidence" value="ECO:0007669"/>
    <property type="project" value="TreeGrafter"/>
</dbReference>
<dbReference type="GO" id="GO:0000774">
    <property type="term" value="F:adenyl-nucleotide exchange factor activity"/>
    <property type="evidence" value="ECO:0007669"/>
    <property type="project" value="InterPro"/>
</dbReference>
<dbReference type="GO" id="GO:0042803">
    <property type="term" value="F:protein homodimerization activity"/>
    <property type="evidence" value="ECO:0007669"/>
    <property type="project" value="InterPro"/>
</dbReference>
<dbReference type="GO" id="GO:0051087">
    <property type="term" value="F:protein-folding chaperone binding"/>
    <property type="evidence" value="ECO:0007669"/>
    <property type="project" value="InterPro"/>
</dbReference>
<dbReference type="GO" id="GO:0051082">
    <property type="term" value="F:unfolded protein binding"/>
    <property type="evidence" value="ECO:0007669"/>
    <property type="project" value="TreeGrafter"/>
</dbReference>
<dbReference type="GO" id="GO:0006457">
    <property type="term" value="P:protein folding"/>
    <property type="evidence" value="ECO:0007669"/>
    <property type="project" value="InterPro"/>
</dbReference>
<dbReference type="CDD" id="cd00446">
    <property type="entry name" value="GrpE"/>
    <property type="match status" value="1"/>
</dbReference>
<dbReference type="FunFam" id="2.30.22.10:FF:000001">
    <property type="entry name" value="Protein GrpE"/>
    <property type="match status" value="1"/>
</dbReference>
<dbReference type="Gene3D" id="3.90.20.20">
    <property type="match status" value="1"/>
</dbReference>
<dbReference type="Gene3D" id="2.30.22.10">
    <property type="entry name" value="Head domain of nucleotide exchange factor GrpE"/>
    <property type="match status" value="1"/>
</dbReference>
<dbReference type="HAMAP" id="MF_01151">
    <property type="entry name" value="GrpE"/>
    <property type="match status" value="1"/>
</dbReference>
<dbReference type="InterPro" id="IPR000740">
    <property type="entry name" value="GrpE"/>
</dbReference>
<dbReference type="InterPro" id="IPR013805">
    <property type="entry name" value="GrpE_coiled_coil"/>
</dbReference>
<dbReference type="InterPro" id="IPR009012">
    <property type="entry name" value="GrpE_head"/>
</dbReference>
<dbReference type="NCBIfam" id="NF010738">
    <property type="entry name" value="PRK14140.1"/>
    <property type="match status" value="1"/>
</dbReference>
<dbReference type="NCBIfam" id="NF010748">
    <property type="entry name" value="PRK14150.1"/>
    <property type="match status" value="1"/>
</dbReference>
<dbReference type="PANTHER" id="PTHR21237">
    <property type="entry name" value="GRPE PROTEIN"/>
    <property type="match status" value="1"/>
</dbReference>
<dbReference type="PANTHER" id="PTHR21237:SF23">
    <property type="entry name" value="GRPE PROTEIN HOMOLOG, MITOCHONDRIAL"/>
    <property type="match status" value="1"/>
</dbReference>
<dbReference type="Pfam" id="PF01025">
    <property type="entry name" value="GrpE"/>
    <property type="match status" value="1"/>
</dbReference>
<dbReference type="PRINTS" id="PR00773">
    <property type="entry name" value="GRPEPROTEIN"/>
</dbReference>
<dbReference type="SUPFAM" id="SSF58014">
    <property type="entry name" value="Coiled-coil domain of nucleotide exchange factor GrpE"/>
    <property type="match status" value="1"/>
</dbReference>
<dbReference type="SUPFAM" id="SSF51064">
    <property type="entry name" value="Head domain of nucleotide exchange factor GrpE"/>
    <property type="match status" value="1"/>
</dbReference>
<dbReference type="PROSITE" id="PS01071">
    <property type="entry name" value="GRPE"/>
    <property type="match status" value="1"/>
</dbReference>
<proteinExistence type="inferred from homology"/>
<evidence type="ECO:0000255" key="1">
    <source>
        <dbReference type="HAMAP-Rule" id="MF_01151"/>
    </source>
</evidence>
<organism>
    <name type="scientific">Actinobacillus pleuropneumoniae serotype 5b (strain L20)</name>
    <dbReference type="NCBI Taxonomy" id="416269"/>
    <lineage>
        <taxon>Bacteria</taxon>
        <taxon>Pseudomonadati</taxon>
        <taxon>Pseudomonadota</taxon>
        <taxon>Gammaproteobacteria</taxon>
        <taxon>Pasteurellales</taxon>
        <taxon>Pasteurellaceae</taxon>
        <taxon>Actinobacillus</taxon>
    </lineage>
</organism>
<comment type="function">
    <text evidence="1">Participates actively in the response to hyperosmotic and heat shock by preventing the aggregation of stress-denatured proteins, in association with DnaK and GrpE. It is the nucleotide exchange factor for DnaK and may function as a thermosensor. Unfolded proteins bind initially to DnaJ; upon interaction with the DnaJ-bound protein, DnaK hydrolyzes its bound ATP, resulting in the formation of a stable complex. GrpE releases ADP from DnaK; ATP binding to DnaK triggers the release of the substrate protein, thus completing the reaction cycle. Several rounds of ATP-dependent interactions between DnaJ, DnaK and GrpE are required for fully efficient folding.</text>
</comment>
<comment type="subunit">
    <text evidence="1">Homodimer.</text>
</comment>
<comment type="subcellular location">
    <subcellularLocation>
        <location evidence="1">Cytoplasm</location>
    </subcellularLocation>
</comment>
<comment type="similarity">
    <text evidence="1">Belongs to the GrpE family.</text>
</comment>
<reference key="1">
    <citation type="journal article" date="2008" name="J. Bacteriol.">
        <title>The complete genome sequence of Actinobacillus pleuropneumoniae L20 (serotype 5b).</title>
        <authorList>
            <person name="Foote S.J."/>
            <person name="Bosse J.T."/>
            <person name="Bouevitch A.B."/>
            <person name="Langford P.R."/>
            <person name="Young N.M."/>
            <person name="Nash J.H.E."/>
        </authorList>
    </citation>
    <scope>NUCLEOTIDE SEQUENCE [LARGE SCALE GENOMIC DNA]</scope>
    <source>
        <strain>L20</strain>
    </source>
</reference>
<accession>A3MZ85</accession>
<gene>
    <name evidence="1" type="primary">grpE</name>
    <name type="ordered locus">APL_0367</name>
</gene>